<feature type="chain" id="PRO_0000362002" description="O-methyltransferase 2">
    <location>
        <begin position="1"/>
        <end position="336"/>
    </location>
</feature>
<feature type="active site" description="Proton acceptor" evidence="1">
    <location>
        <position position="241"/>
    </location>
</feature>
<feature type="binding site" evidence="1">
    <location>
        <position position="170"/>
    </location>
    <ligand>
        <name>S-adenosyl-L-methionine</name>
        <dbReference type="ChEBI" id="CHEBI:59789"/>
    </ligand>
</feature>
<feature type="binding site" evidence="1">
    <location>
        <position position="198"/>
    </location>
    <ligand>
        <name>S-adenosyl-L-methionine</name>
        <dbReference type="ChEBI" id="CHEBI:59789"/>
    </ligand>
</feature>
<feature type="binding site" evidence="1">
    <location>
        <position position="221"/>
    </location>
    <ligand>
        <name>S-adenosyl-L-methionine</name>
        <dbReference type="ChEBI" id="CHEBI:59789"/>
    </ligand>
</feature>
<feature type="binding site" evidence="1">
    <location>
        <position position="222"/>
    </location>
    <ligand>
        <name>S-adenosyl-L-methionine</name>
        <dbReference type="ChEBI" id="CHEBI:59789"/>
    </ligand>
</feature>
<feature type="binding site" evidence="1">
    <location>
        <position position="237"/>
    </location>
    <ligand>
        <name>S-adenosyl-L-methionine</name>
        <dbReference type="ChEBI" id="CHEBI:59789"/>
    </ligand>
</feature>
<organism>
    <name type="scientific">Dictyostelium discoideum</name>
    <name type="common">Social amoeba</name>
    <dbReference type="NCBI Taxonomy" id="44689"/>
    <lineage>
        <taxon>Eukaryota</taxon>
        <taxon>Amoebozoa</taxon>
        <taxon>Evosea</taxon>
        <taxon>Eumycetozoa</taxon>
        <taxon>Dictyostelia</taxon>
        <taxon>Dictyosteliales</taxon>
        <taxon>Dictyosteliaceae</taxon>
        <taxon>Dictyostelium</taxon>
    </lineage>
</organism>
<proteinExistence type="inferred from homology"/>
<sequence length="336" mass="39425">MENIQIKNFIYDIATGYIKSYSLKVILELEIPNKLKNECNGYNEHGLYVLLRTLSTMGIFKEDEEIDRLFSNTEISETLINDTDKYPWVNDSYFQVTLLPYFKHIEESLKTGKAMGTFNSGYNDGFDFIDKEKNLKKYFHNTLTEYTRTQIDSILEIVDFSNFKTIVDLGGSQGESIKKILDKYHLNNSIIEKGINYDLKEVIENNEKNYKDNRYFEIMGNFFTDETFPIGNCYLVKYIFHMFSDNQVLEILNKIYKSIKSSYQNEVCIYIFDHIIYKNKKSIPISIEYHTINILNGGKERTLNEWNNLIKLSNFKIDKVSSLPNILCSFIKLSLN</sequence>
<gene>
    <name type="primary">omt2</name>
    <name type="ORF">DDB_G0274941</name>
</gene>
<accession>Q86HS9</accession>
<accession>Q554Y5</accession>
<dbReference type="EC" id="2.1.1.-"/>
<dbReference type="EMBL" id="AAFI02000012">
    <property type="protein sequence ID" value="EAL70363.2"/>
    <property type="molecule type" value="Genomic_DNA"/>
</dbReference>
<dbReference type="RefSeq" id="XP_644188.2">
    <property type="nucleotide sequence ID" value="XM_639096.2"/>
</dbReference>
<dbReference type="SMR" id="Q86HS9"/>
<dbReference type="PaxDb" id="44689-DDB0266730"/>
<dbReference type="EnsemblProtists" id="EAL70363">
    <property type="protein sequence ID" value="EAL70363"/>
    <property type="gene ID" value="DDB_G0274941"/>
</dbReference>
<dbReference type="GeneID" id="8619617"/>
<dbReference type="KEGG" id="ddi:DDB_G0274941"/>
<dbReference type="dictyBase" id="DDB_G0274941">
    <property type="gene designation" value="omt2"/>
</dbReference>
<dbReference type="VEuPathDB" id="AmoebaDB:DDB_G0274941"/>
<dbReference type="eggNOG" id="KOG3178">
    <property type="taxonomic scope" value="Eukaryota"/>
</dbReference>
<dbReference type="HOGENOM" id="CLU_005533_12_0_1"/>
<dbReference type="InParanoid" id="Q86HS9"/>
<dbReference type="OMA" id="ENQQSCG"/>
<dbReference type="PhylomeDB" id="Q86HS9"/>
<dbReference type="PRO" id="PR:Q86HS9"/>
<dbReference type="Proteomes" id="UP000002195">
    <property type="component" value="Chromosome 2"/>
</dbReference>
<dbReference type="GO" id="GO:0106268">
    <property type="term" value="F:3,5-dichloro-THPH methyl transferase activity"/>
    <property type="evidence" value="ECO:0007669"/>
    <property type="project" value="RHEA"/>
</dbReference>
<dbReference type="GO" id="GO:0008171">
    <property type="term" value="F:O-methyltransferase activity"/>
    <property type="evidence" value="ECO:0000318"/>
    <property type="project" value="GO_Central"/>
</dbReference>
<dbReference type="GO" id="GO:0008757">
    <property type="term" value="F:S-adenosylmethionine-dependent methyltransferase activity"/>
    <property type="evidence" value="ECO:0000318"/>
    <property type="project" value="GO_Central"/>
</dbReference>
<dbReference type="GO" id="GO:0009058">
    <property type="term" value="P:biosynthetic process"/>
    <property type="evidence" value="ECO:0000318"/>
    <property type="project" value="GO_Central"/>
</dbReference>
<dbReference type="GO" id="GO:0032259">
    <property type="term" value="P:methylation"/>
    <property type="evidence" value="ECO:0000318"/>
    <property type="project" value="GO_Central"/>
</dbReference>
<dbReference type="FunFam" id="1.10.10.10:FF:001273">
    <property type="entry name" value="Des-methyl DIF-1 methyltransferase A"/>
    <property type="match status" value="1"/>
</dbReference>
<dbReference type="FunFam" id="3.40.50.150:FF:000407">
    <property type="entry name" value="O-methyltransferase 4"/>
    <property type="match status" value="1"/>
</dbReference>
<dbReference type="Gene3D" id="3.40.50.150">
    <property type="entry name" value="Vaccinia Virus protein VP39"/>
    <property type="match status" value="1"/>
</dbReference>
<dbReference type="Gene3D" id="1.10.10.10">
    <property type="entry name" value="Winged helix-like DNA-binding domain superfamily/Winged helix DNA-binding domain"/>
    <property type="match status" value="1"/>
</dbReference>
<dbReference type="InterPro" id="IPR016461">
    <property type="entry name" value="COMT-like"/>
</dbReference>
<dbReference type="InterPro" id="IPR001077">
    <property type="entry name" value="O_MeTrfase_dom"/>
</dbReference>
<dbReference type="InterPro" id="IPR029063">
    <property type="entry name" value="SAM-dependent_MTases_sf"/>
</dbReference>
<dbReference type="InterPro" id="IPR036388">
    <property type="entry name" value="WH-like_DNA-bd_sf"/>
</dbReference>
<dbReference type="InterPro" id="IPR036390">
    <property type="entry name" value="WH_DNA-bd_sf"/>
</dbReference>
<dbReference type="PANTHER" id="PTHR11746">
    <property type="entry name" value="O-METHYLTRANSFERASE"/>
    <property type="match status" value="1"/>
</dbReference>
<dbReference type="Pfam" id="PF00891">
    <property type="entry name" value="Methyltransf_2"/>
    <property type="match status" value="1"/>
</dbReference>
<dbReference type="PIRSF" id="PIRSF005739">
    <property type="entry name" value="O-mtase"/>
    <property type="match status" value="1"/>
</dbReference>
<dbReference type="SUPFAM" id="SSF53335">
    <property type="entry name" value="S-adenosyl-L-methionine-dependent methyltransferases"/>
    <property type="match status" value="1"/>
</dbReference>
<dbReference type="SUPFAM" id="SSF46785">
    <property type="entry name" value="Winged helix' DNA-binding domain"/>
    <property type="match status" value="1"/>
</dbReference>
<dbReference type="PROSITE" id="PS51683">
    <property type="entry name" value="SAM_OMT_II"/>
    <property type="match status" value="1"/>
</dbReference>
<keyword id="KW-0489">Methyltransferase</keyword>
<keyword id="KW-1185">Reference proteome</keyword>
<keyword id="KW-0949">S-adenosyl-L-methionine</keyword>
<keyword id="KW-0808">Transferase</keyword>
<protein>
    <recommendedName>
        <fullName>O-methyltransferase 2</fullName>
        <ecNumber>2.1.1.-</ecNumber>
    </recommendedName>
</protein>
<comment type="catalytic activity">
    <reaction>
        <text>(3,5-dichloro-2,4,6-trihydroxyphenyl)hexan-1-one + S-adenosyl-L-methionine = 1-(3,5-dichloro-2,6-dihydroxy-4-methoxyphenyl)hexan-1-one + S-adenosyl-L-homocysteine + H(+)</text>
        <dbReference type="Rhea" id="RHEA:48396"/>
        <dbReference type="ChEBI" id="CHEBI:15378"/>
        <dbReference type="ChEBI" id="CHEBI:57856"/>
        <dbReference type="ChEBI" id="CHEBI:59789"/>
        <dbReference type="ChEBI" id="CHEBI:90397"/>
        <dbReference type="ChEBI" id="CHEBI:90398"/>
    </reaction>
</comment>
<comment type="similarity">
    <text evidence="1">Belongs to the class I-like SAM-binding methyltransferase superfamily. Cation-independent O-methyltransferase family. COMT subfamily.</text>
</comment>
<name>OMT2_DICDI</name>
<evidence type="ECO:0000255" key="1">
    <source>
        <dbReference type="PROSITE-ProRule" id="PRU01020"/>
    </source>
</evidence>
<reference key="1">
    <citation type="journal article" date="2002" name="Nature">
        <title>Sequence and analysis of chromosome 2 of Dictyostelium discoideum.</title>
        <authorList>
            <person name="Gloeckner G."/>
            <person name="Eichinger L."/>
            <person name="Szafranski K."/>
            <person name="Pachebat J.A."/>
            <person name="Bankier A.T."/>
            <person name="Dear P.H."/>
            <person name="Lehmann R."/>
            <person name="Baumgart C."/>
            <person name="Parra G."/>
            <person name="Abril J.F."/>
            <person name="Guigo R."/>
            <person name="Kumpf K."/>
            <person name="Tunggal B."/>
            <person name="Cox E.C."/>
            <person name="Quail M.A."/>
            <person name="Platzer M."/>
            <person name="Rosenthal A."/>
            <person name="Noegel A.A."/>
        </authorList>
    </citation>
    <scope>NUCLEOTIDE SEQUENCE [LARGE SCALE GENOMIC DNA]</scope>
    <source>
        <strain>AX4</strain>
    </source>
</reference>
<reference key="2">
    <citation type="journal article" date="2005" name="Nature">
        <title>The genome of the social amoeba Dictyostelium discoideum.</title>
        <authorList>
            <person name="Eichinger L."/>
            <person name="Pachebat J.A."/>
            <person name="Gloeckner G."/>
            <person name="Rajandream M.A."/>
            <person name="Sucgang R."/>
            <person name="Berriman M."/>
            <person name="Song J."/>
            <person name="Olsen R."/>
            <person name="Szafranski K."/>
            <person name="Xu Q."/>
            <person name="Tunggal B."/>
            <person name="Kummerfeld S."/>
            <person name="Madera M."/>
            <person name="Konfortov B.A."/>
            <person name="Rivero F."/>
            <person name="Bankier A.T."/>
            <person name="Lehmann R."/>
            <person name="Hamlin N."/>
            <person name="Davies R."/>
            <person name="Gaudet P."/>
            <person name="Fey P."/>
            <person name="Pilcher K."/>
            <person name="Chen G."/>
            <person name="Saunders D."/>
            <person name="Sodergren E.J."/>
            <person name="Davis P."/>
            <person name="Kerhornou A."/>
            <person name="Nie X."/>
            <person name="Hall N."/>
            <person name="Anjard C."/>
            <person name="Hemphill L."/>
            <person name="Bason N."/>
            <person name="Farbrother P."/>
            <person name="Desany B."/>
            <person name="Just E."/>
            <person name="Morio T."/>
            <person name="Rost R."/>
            <person name="Churcher C.M."/>
            <person name="Cooper J."/>
            <person name="Haydock S."/>
            <person name="van Driessche N."/>
            <person name="Cronin A."/>
            <person name="Goodhead I."/>
            <person name="Muzny D.M."/>
            <person name="Mourier T."/>
            <person name="Pain A."/>
            <person name="Lu M."/>
            <person name="Harper D."/>
            <person name="Lindsay R."/>
            <person name="Hauser H."/>
            <person name="James K.D."/>
            <person name="Quiles M."/>
            <person name="Madan Babu M."/>
            <person name="Saito T."/>
            <person name="Buchrieser C."/>
            <person name="Wardroper A."/>
            <person name="Felder M."/>
            <person name="Thangavelu M."/>
            <person name="Johnson D."/>
            <person name="Knights A."/>
            <person name="Loulseged H."/>
            <person name="Mungall K.L."/>
            <person name="Oliver K."/>
            <person name="Price C."/>
            <person name="Quail M.A."/>
            <person name="Urushihara H."/>
            <person name="Hernandez J."/>
            <person name="Rabbinowitsch E."/>
            <person name="Steffen D."/>
            <person name="Sanders M."/>
            <person name="Ma J."/>
            <person name="Kohara Y."/>
            <person name="Sharp S."/>
            <person name="Simmonds M.N."/>
            <person name="Spiegler S."/>
            <person name="Tivey A."/>
            <person name="Sugano S."/>
            <person name="White B."/>
            <person name="Walker D."/>
            <person name="Woodward J.R."/>
            <person name="Winckler T."/>
            <person name="Tanaka Y."/>
            <person name="Shaulsky G."/>
            <person name="Schleicher M."/>
            <person name="Weinstock G.M."/>
            <person name="Rosenthal A."/>
            <person name="Cox E.C."/>
            <person name="Chisholm R.L."/>
            <person name="Gibbs R.A."/>
            <person name="Loomis W.F."/>
            <person name="Platzer M."/>
            <person name="Kay R.R."/>
            <person name="Williams J.G."/>
            <person name="Dear P.H."/>
            <person name="Noegel A.A."/>
            <person name="Barrell B.G."/>
            <person name="Kuspa A."/>
        </authorList>
    </citation>
    <scope>NUCLEOTIDE SEQUENCE [LARGE SCALE GENOMIC DNA]</scope>
    <source>
        <strain>AX4</strain>
    </source>
</reference>